<proteinExistence type="inferred from homology"/>
<accession>Q3C1Q1</accession>
<dbReference type="EC" id="7.1.1.-"/>
<dbReference type="EMBL" id="AB237912">
    <property type="protein sequence ID" value="BAE46717.1"/>
    <property type="molecule type" value="Genomic_DNA"/>
</dbReference>
<dbReference type="RefSeq" id="YP_358740.1">
    <property type="nucleotide sequence ID" value="NC_007500.1"/>
</dbReference>
<dbReference type="SMR" id="Q3C1Q1"/>
<dbReference type="GeneID" id="3735065"/>
<dbReference type="KEGG" id="nsy:3735065"/>
<dbReference type="OrthoDB" id="29126at4085"/>
<dbReference type="Proteomes" id="UP000189701">
    <property type="component" value="Chloroplast Pltd"/>
</dbReference>
<dbReference type="GO" id="GO:0009535">
    <property type="term" value="C:chloroplast thylakoid membrane"/>
    <property type="evidence" value="ECO:0007669"/>
    <property type="project" value="UniProtKB-SubCell"/>
</dbReference>
<dbReference type="GO" id="GO:0008137">
    <property type="term" value="F:NADH dehydrogenase (ubiquinone) activity"/>
    <property type="evidence" value="ECO:0007669"/>
    <property type="project" value="InterPro"/>
</dbReference>
<dbReference type="GO" id="GO:0048038">
    <property type="term" value="F:quinone binding"/>
    <property type="evidence" value="ECO:0007669"/>
    <property type="project" value="UniProtKB-KW"/>
</dbReference>
<dbReference type="FunFam" id="1.20.120.1200:FF:000002">
    <property type="entry name" value="NAD(P)H-quinone oxidoreductase subunit 6, chloroplastic"/>
    <property type="match status" value="1"/>
</dbReference>
<dbReference type="Gene3D" id="1.20.120.1200">
    <property type="entry name" value="NADH-ubiquinone/plastoquinone oxidoreductase chain 6, subunit NuoJ"/>
    <property type="match status" value="1"/>
</dbReference>
<dbReference type="InterPro" id="IPR050290">
    <property type="entry name" value="NAD(P)H-Q_Oxidoreduct_6"/>
</dbReference>
<dbReference type="InterPro" id="IPR001457">
    <property type="entry name" value="NADH_UbQ/plastoQ_OxRdtase_su6"/>
</dbReference>
<dbReference type="InterPro" id="IPR042106">
    <property type="entry name" value="Nuo/plastoQ_OxRdtase_6_NuoJ"/>
</dbReference>
<dbReference type="PANTHER" id="PTHR48479">
    <property type="entry name" value="NAD(P)H-QUINONE OXIDOREDUCTASE SUBUNIT 6, CHLOROPLASTIC"/>
    <property type="match status" value="1"/>
</dbReference>
<dbReference type="PANTHER" id="PTHR48479:SF1">
    <property type="entry name" value="NAD(P)H-QUINONE OXIDOREDUCTASE SUBUNIT 6, CHLOROPLASTIC"/>
    <property type="match status" value="1"/>
</dbReference>
<dbReference type="Pfam" id="PF00499">
    <property type="entry name" value="Oxidored_q3"/>
    <property type="match status" value="1"/>
</dbReference>
<sequence length="176" mass="19369">MDLSEPIHDFLLVFLGSGLILGGLGVVLLPNPIYSAFSLGLVLVCTSLFYILSNSYFVAAAQLLIYVGAINVLIIFAVMFMNGSEYYKDFHLWTVGDGITSMVCISLFISLITTISDTSWYGIIWTTRSNQIIEQDFISNSQQIGIHLSTDFFLPFELISIILLVALIGAIAVARQ</sequence>
<geneLocation type="chloroplast"/>
<protein>
    <recommendedName>
        <fullName>NAD(P)H-quinone oxidoreductase subunit 6, chloroplastic</fullName>
        <ecNumber>7.1.1.-</ecNumber>
    </recommendedName>
    <alternativeName>
        <fullName>NAD(P)H dehydrogenase subunit 6</fullName>
    </alternativeName>
    <alternativeName>
        <fullName>NADH-plastoquinone oxidoreductase subunit 6</fullName>
    </alternativeName>
</protein>
<gene>
    <name type="primary">ndhG</name>
</gene>
<reference key="1">
    <citation type="journal article" date="2006" name="Mol. Genet. Genomics">
        <title>The chloroplast genome of Nicotiana sylvestris and Nicotiana tomentosiformis: complete sequencing confirms that the Nicotiana sylvestris progenitor is the maternal genome donor of Nicotiana tabacum.</title>
        <authorList>
            <person name="Yukawa M."/>
            <person name="Tsudzuki T."/>
            <person name="Sugiura M."/>
        </authorList>
    </citation>
    <scope>NUCLEOTIDE SEQUENCE [LARGE SCALE GENOMIC DNA]</scope>
</reference>
<evidence type="ECO:0000250" key="1"/>
<evidence type="ECO:0000255" key="2"/>
<evidence type="ECO:0000305" key="3"/>
<keyword id="KW-0150">Chloroplast</keyword>
<keyword id="KW-0472">Membrane</keyword>
<keyword id="KW-0520">NAD</keyword>
<keyword id="KW-0521">NADP</keyword>
<keyword id="KW-0934">Plastid</keyword>
<keyword id="KW-0618">Plastoquinone</keyword>
<keyword id="KW-0874">Quinone</keyword>
<keyword id="KW-1185">Reference proteome</keyword>
<keyword id="KW-0793">Thylakoid</keyword>
<keyword id="KW-1278">Translocase</keyword>
<keyword id="KW-0812">Transmembrane</keyword>
<keyword id="KW-1133">Transmembrane helix</keyword>
<keyword id="KW-0813">Transport</keyword>
<feature type="chain" id="PRO_0000360272" description="NAD(P)H-quinone oxidoreductase subunit 6, chloroplastic">
    <location>
        <begin position="1"/>
        <end position="176"/>
    </location>
</feature>
<feature type="transmembrane region" description="Helical" evidence="2">
    <location>
        <begin position="10"/>
        <end position="30"/>
    </location>
</feature>
<feature type="transmembrane region" description="Helical" evidence="2">
    <location>
        <begin position="32"/>
        <end position="52"/>
    </location>
</feature>
<feature type="transmembrane region" description="Helical" evidence="2">
    <location>
        <begin position="61"/>
        <end position="81"/>
    </location>
</feature>
<feature type="transmembrane region" description="Helical" evidence="2">
    <location>
        <begin position="92"/>
        <end position="112"/>
    </location>
</feature>
<feature type="transmembrane region" description="Helical" evidence="2">
    <location>
        <begin position="152"/>
        <end position="172"/>
    </location>
</feature>
<organism>
    <name type="scientific">Nicotiana sylvestris</name>
    <name type="common">Wood tobacco</name>
    <name type="synonym">South American tobacco</name>
    <dbReference type="NCBI Taxonomy" id="4096"/>
    <lineage>
        <taxon>Eukaryota</taxon>
        <taxon>Viridiplantae</taxon>
        <taxon>Streptophyta</taxon>
        <taxon>Embryophyta</taxon>
        <taxon>Tracheophyta</taxon>
        <taxon>Spermatophyta</taxon>
        <taxon>Magnoliopsida</taxon>
        <taxon>eudicotyledons</taxon>
        <taxon>Gunneridae</taxon>
        <taxon>Pentapetalae</taxon>
        <taxon>asterids</taxon>
        <taxon>lamiids</taxon>
        <taxon>Solanales</taxon>
        <taxon>Solanaceae</taxon>
        <taxon>Nicotianoideae</taxon>
        <taxon>Nicotianeae</taxon>
        <taxon>Nicotiana</taxon>
    </lineage>
</organism>
<comment type="function">
    <text evidence="1">NDH shuttles electrons from NAD(P)H:plastoquinone, via FMN and iron-sulfur (Fe-S) centers, to quinones in the photosynthetic chain and possibly in a chloroplast respiratory chain. The immediate electron acceptor for the enzyme in this species is believed to be plastoquinone. Couples the redox reaction to proton translocation, and thus conserves the redox energy in a proton gradient (By similarity).</text>
</comment>
<comment type="catalytic activity">
    <reaction>
        <text>a plastoquinone + NADH + (n+1) H(+)(in) = a plastoquinol + NAD(+) + n H(+)(out)</text>
        <dbReference type="Rhea" id="RHEA:42608"/>
        <dbReference type="Rhea" id="RHEA-COMP:9561"/>
        <dbReference type="Rhea" id="RHEA-COMP:9562"/>
        <dbReference type="ChEBI" id="CHEBI:15378"/>
        <dbReference type="ChEBI" id="CHEBI:17757"/>
        <dbReference type="ChEBI" id="CHEBI:57540"/>
        <dbReference type="ChEBI" id="CHEBI:57945"/>
        <dbReference type="ChEBI" id="CHEBI:62192"/>
    </reaction>
</comment>
<comment type="catalytic activity">
    <reaction>
        <text>a plastoquinone + NADPH + (n+1) H(+)(in) = a plastoquinol + NADP(+) + n H(+)(out)</text>
        <dbReference type="Rhea" id="RHEA:42612"/>
        <dbReference type="Rhea" id="RHEA-COMP:9561"/>
        <dbReference type="Rhea" id="RHEA-COMP:9562"/>
        <dbReference type="ChEBI" id="CHEBI:15378"/>
        <dbReference type="ChEBI" id="CHEBI:17757"/>
        <dbReference type="ChEBI" id="CHEBI:57783"/>
        <dbReference type="ChEBI" id="CHEBI:58349"/>
        <dbReference type="ChEBI" id="CHEBI:62192"/>
    </reaction>
</comment>
<comment type="subunit">
    <text evidence="1">NDH is composed of at least 16 different subunits, 5 of which are encoded in the nucleus.</text>
</comment>
<comment type="subcellular location">
    <subcellularLocation>
        <location evidence="1">Plastid</location>
        <location evidence="1">Chloroplast thylakoid membrane</location>
        <topology evidence="1">Multi-pass membrane protein</topology>
    </subcellularLocation>
</comment>
<comment type="similarity">
    <text evidence="3">Belongs to the complex I subunit 6 family.</text>
</comment>
<name>NU6C_NICSY</name>